<dbReference type="EMBL" id="AB010100">
    <property type="protein sequence ID" value="BAA24537.1"/>
    <property type="molecule type" value="mRNA"/>
</dbReference>
<dbReference type="EMBL" id="AK076642">
    <property type="protein sequence ID" value="BAC36431.1"/>
    <property type="molecule type" value="mRNA"/>
</dbReference>
<dbReference type="EMBL" id="BC022223">
    <property type="protein sequence ID" value="AAH22223.1"/>
    <property type="molecule type" value="mRNA"/>
</dbReference>
<dbReference type="CCDS" id="CCDS18055.1"/>
<dbReference type="RefSeq" id="NP_001365568.1">
    <property type="nucleotide sequence ID" value="NM_001378639.1"/>
</dbReference>
<dbReference type="RefSeq" id="NP_031499.1">
    <property type="nucleotide sequence ID" value="NM_007473.5"/>
</dbReference>
<dbReference type="RefSeq" id="XP_006537623.2">
    <property type="nucleotide sequence ID" value="XM_006537560.5"/>
</dbReference>
<dbReference type="SMR" id="O54794"/>
<dbReference type="FunCoup" id="O54794">
    <property type="interactions" value="102"/>
</dbReference>
<dbReference type="STRING" id="10090.ENSMUSP00000030136"/>
<dbReference type="iPTMnet" id="O54794"/>
<dbReference type="PhosphoSitePlus" id="O54794"/>
<dbReference type="SwissPalm" id="O54794"/>
<dbReference type="jPOST" id="O54794"/>
<dbReference type="PaxDb" id="10090-ENSMUSP00000030136"/>
<dbReference type="ProteomicsDB" id="273914"/>
<dbReference type="DNASU" id="11832"/>
<dbReference type="Ensembl" id="ENSMUST00000030136.13">
    <property type="protein sequence ID" value="ENSMUSP00000030136.7"/>
    <property type="gene ID" value="ENSMUSG00000028427.14"/>
</dbReference>
<dbReference type="Ensembl" id="ENSMUST00000054945.8">
    <property type="protein sequence ID" value="ENSMUSP00000093007.4"/>
    <property type="gene ID" value="ENSMUSG00000028427.14"/>
</dbReference>
<dbReference type="GeneID" id="11832"/>
<dbReference type="KEGG" id="mmu:11832"/>
<dbReference type="UCSC" id="uc008sif.1">
    <property type="organism name" value="mouse"/>
</dbReference>
<dbReference type="AGR" id="MGI:1314647"/>
<dbReference type="CTD" id="364"/>
<dbReference type="MGI" id="MGI:1314647">
    <property type="gene designation" value="Aqp7"/>
</dbReference>
<dbReference type="VEuPathDB" id="HostDB:ENSMUSG00000028427"/>
<dbReference type="eggNOG" id="KOG0224">
    <property type="taxonomic scope" value="Eukaryota"/>
</dbReference>
<dbReference type="GeneTree" id="ENSGT00940000159054"/>
<dbReference type="HOGENOM" id="CLU_020019_9_1_1"/>
<dbReference type="InParanoid" id="O54794"/>
<dbReference type="OMA" id="CALGRMP"/>
<dbReference type="OrthoDB" id="3222at2759"/>
<dbReference type="PhylomeDB" id="O54794"/>
<dbReference type="TreeFam" id="TF313173"/>
<dbReference type="Reactome" id="R-MMU-432030">
    <property type="pathway name" value="Transport of glycerol from adipocytes to the liver by Aquaporins"/>
</dbReference>
<dbReference type="Reactome" id="R-MMU-432047">
    <property type="pathway name" value="Passive transport by Aquaporins"/>
</dbReference>
<dbReference type="BioGRID-ORCS" id="11832">
    <property type="hits" value="0 hits in 76 CRISPR screens"/>
</dbReference>
<dbReference type="ChiTaRS" id="Aqp7">
    <property type="organism name" value="mouse"/>
</dbReference>
<dbReference type="PRO" id="PR:O54794"/>
<dbReference type="Proteomes" id="UP000000589">
    <property type="component" value="Chromosome 4"/>
</dbReference>
<dbReference type="RNAct" id="O54794">
    <property type="molecule type" value="protein"/>
</dbReference>
<dbReference type="Bgee" id="ENSMUSG00000028427">
    <property type="expression patterns" value="Expressed in spermatid and 75 other cell types or tissues"/>
</dbReference>
<dbReference type="ExpressionAtlas" id="O54794">
    <property type="expression patterns" value="baseline and differential"/>
</dbReference>
<dbReference type="GO" id="GO:0030659">
    <property type="term" value="C:cytoplasmic vesicle membrane"/>
    <property type="evidence" value="ECO:0007669"/>
    <property type="project" value="UniProtKB-SubCell"/>
</dbReference>
<dbReference type="GO" id="GO:0005811">
    <property type="term" value="C:lipid droplet"/>
    <property type="evidence" value="ECO:0007669"/>
    <property type="project" value="UniProtKB-SubCell"/>
</dbReference>
<dbReference type="GO" id="GO:0005886">
    <property type="term" value="C:plasma membrane"/>
    <property type="evidence" value="ECO:0000314"/>
    <property type="project" value="UniProtKB"/>
</dbReference>
<dbReference type="GO" id="GO:0015254">
    <property type="term" value="F:glycerol channel activity"/>
    <property type="evidence" value="ECO:0000250"/>
    <property type="project" value="UniProtKB"/>
</dbReference>
<dbReference type="GO" id="GO:0015204">
    <property type="term" value="F:urea transmembrane transporter activity"/>
    <property type="evidence" value="ECO:0000250"/>
    <property type="project" value="UniProtKB"/>
</dbReference>
<dbReference type="GO" id="GO:0015250">
    <property type="term" value="F:water channel activity"/>
    <property type="evidence" value="ECO:0000250"/>
    <property type="project" value="UniProtKB"/>
</dbReference>
<dbReference type="GO" id="GO:0015793">
    <property type="term" value="P:glycerol transmembrane transport"/>
    <property type="evidence" value="ECO:0000315"/>
    <property type="project" value="MGI"/>
</dbReference>
<dbReference type="GO" id="GO:0070295">
    <property type="term" value="P:renal water absorption"/>
    <property type="evidence" value="ECO:0000316"/>
    <property type="project" value="MGI"/>
</dbReference>
<dbReference type="GO" id="GO:0006833">
    <property type="term" value="P:water transport"/>
    <property type="evidence" value="ECO:0000250"/>
    <property type="project" value="UniProtKB"/>
</dbReference>
<dbReference type="CDD" id="cd00333">
    <property type="entry name" value="MIP"/>
    <property type="match status" value="1"/>
</dbReference>
<dbReference type="FunFam" id="1.20.1080.10:FF:000005">
    <property type="entry name" value="Aquaporin 3"/>
    <property type="match status" value="1"/>
</dbReference>
<dbReference type="Gene3D" id="1.20.1080.10">
    <property type="entry name" value="Glycerol uptake facilitator protein"/>
    <property type="match status" value="1"/>
</dbReference>
<dbReference type="InterPro" id="IPR023271">
    <property type="entry name" value="Aquaporin-like"/>
</dbReference>
<dbReference type="InterPro" id="IPR000425">
    <property type="entry name" value="MIP"/>
</dbReference>
<dbReference type="InterPro" id="IPR050363">
    <property type="entry name" value="MIP/Aquaporin"/>
</dbReference>
<dbReference type="NCBIfam" id="TIGR00861">
    <property type="entry name" value="MIP"/>
    <property type="match status" value="1"/>
</dbReference>
<dbReference type="PANTHER" id="PTHR43829">
    <property type="entry name" value="AQUAPORIN OR AQUAGLYCEROPORIN RELATED"/>
    <property type="match status" value="1"/>
</dbReference>
<dbReference type="PANTHER" id="PTHR43829:SF15">
    <property type="entry name" value="AQUAPORIN-7"/>
    <property type="match status" value="1"/>
</dbReference>
<dbReference type="Pfam" id="PF00230">
    <property type="entry name" value="MIP"/>
    <property type="match status" value="1"/>
</dbReference>
<dbReference type="PRINTS" id="PR02019">
    <property type="entry name" value="AQUAPORIN7"/>
</dbReference>
<dbReference type="PRINTS" id="PR00783">
    <property type="entry name" value="MINTRINSICP"/>
</dbReference>
<dbReference type="SUPFAM" id="SSF81338">
    <property type="entry name" value="Aquaporin-like"/>
    <property type="match status" value="1"/>
</dbReference>
<feature type="chain" id="PRO_0000063959" description="Aquaporin-7">
    <location>
        <begin position="1"/>
        <end position="303"/>
    </location>
</feature>
<feature type="topological domain" description="Cytoplasmic" evidence="1">
    <location>
        <begin position="1"/>
        <end position="21"/>
    </location>
</feature>
<feature type="transmembrane region" description="Helical; Name=1" evidence="1">
    <location>
        <begin position="22"/>
        <end position="39"/>
    </location>
</feature>
<feature type="topological domain" description="Extracellular" evidence="1">
    <location>
        <begin position="40"/>
        <end position="52"/>
    </location>
</feature>
<feature type="transmembrane region" description="Helical; Name=2" evidence="1">
    <location>
        <begin position="53"/>
        <end position="70"/>
    </location>
</feature>
<feature type="topological domain" description="Cytoplasmic" evidence="1">
    <location>
        <begin position="71"/>
        <end position="74"/>
    </location>
</feature>
<feature type="intramembrane region" description="Discontinuously helical" evidence="1">
    <location>
        <begin position="75"/>
        <end position="88"/>
    </location>
</feature>
<feature type="topological domain" description="Cytoplasmic" evidence="1">
    <location>
        <begin position="89"/>
        <end position="96"/>
    </location>
</feature>
<feature type="transmembrane region" description="Helical; Name=3" evidence="1">
    <location>
        <begin position="97"/>
        <end position="117"/>
    </location>
</feature>
<feature type="topological domain" description="Extracellular" evidence="1">
    <location>
        <begin position="118"/>
        <end position="152"/>
    </location>
</feature>
<feature type="transmembrane region" description="Helical; Name=4" evidence="1">
    <location>
        <begin position="153"/>
        <end position="173"/>
    </location>
</feature>
<feature type="topological domain" description="Cytoplasmic" evidence="1">
    <location>
        <begin position="174"/>
        <end position="185"/>
    </location>
</feature>
<feature type="transmembrane region" description="Helical; Name=5" evidence="1">
    <location>
        <begin position="186"/>
        <end position="202"/>
    </location>
</feature>
<feature type="topological domain" description="Extracellular" evidence="1">
    <location>
        <begin position="203"/>
        <end position="206"/>
    </location>
</feature>
<feature type="intramembrane region" description="Discontinuously helical" evidence="1">
    <location>
        <begin position="207"/>
        <end position="220"/>
    </location>
</feature>
<feature type="topological domain" description="Extracellular" evidence="1">
    <location>
        <begin position="221"/>
        <end position="238"/>
    </location>
</feature>
<feature type="transmembrane region" description="Helical; Name=6" evidence="1">
    <location>
        <begin position="239"/>
        <end position="260"/>
    </location>
</feature>
<feature type="topological domain" description="Cytoplasmic" evidence="1">
    <location>
        <begin position="261"/>
        <end position="303"/>
    </location>
</feature>
<feature type="short sequence motif" description="NPA 1" evidence="1">
    <location>
        <begin position="79"/>
        <end position="81"/>
    </location>
</feature>
<feature type="short sequence motif" description="NPA 2" evidence="1">
    <location>
        <begin position="211"/>
        <end position="213"/>
    </location>
</feature>
<feature type="site" description="Selectivity filter" evidence="1">
    <location>
        <position position="59"/>
    </location>
</feature>
<feature type="site" description="Important for permeability to glycerol" evidence="1">
    <location>
        <position position="120"/>
    </location>
</feature>
<feature type="site" description="Selectivity filter" evidence="1">
    <location>
        <position position="208"/>
    </location>
</feature>
<feature type="site" description="Selectivity filter" evidence="1">
    <location>
        <position position="214"/>
    </location>
</feature>
<feature type="modified residue" description="Phosphoserine" evidence="4">
    <location>
        <position position="5"/>
    </location>
</feature>
<feature type="sequence conflict" description="In Ref. 2; BAC36431." evidence="12" ref="2">
    <original>S</original>
    <variation>R</variation>
    <location>
        <position position="180"/>
    </location>
</feature>
<feature type="sequence conflict" description="In Ref. 2; BAC36431." evidence="12" ref="2">
    <original>D</original>
    <variation>Y</variation>
    <location>
        <position position="279"/>
    </location>
</feature>
<evidence type="ECO:0000250" key="1">
    <source>
        <dbReference type="UniProtKB" id="O14520"/>
    </source>
</evidence>
<evidence type="ECO:0000250" key="2">
    <source>
        <dbReference type="UniProtKB" id="P55064"/>
    </source>
</evidence>
<evidence type="ECO:0000250" key="3">
    <source>
        <dbReference type="UniProtKB" id="P55087"/>
    </source>
</evidence>
<evidence type="ECO:0000250" key="4">
    <source>
        <dbReference type="UniProtKB" id="P56403"/>
    </source>
</evidence>
<evidence type="ECO:0000269" key="5">
    <source>
    </source>
</evidence>
<evidence type="ECO:0000269" key="6">
    <source>
    </source>
</evidence>
<evidence type="ECO:0000269" key="7">
    <source>
    </source>
</evidence>
<evidence type="ECO:0000269" key="8">
    <source>
    </source>
</evidence>
<evidence type="ECO:0000269" key="9">
    <source>
    </source>
</evidence>
<evidence type="ECO:0000269" key="10">
    <source>
    </source>
</evidence>
<evidence type="ECO:0000269" key="11">
    <source>
    </source>
</evidence>
<evidence type="ECO:0000305" key="12"/>
<evidence type="ECO:0000305" key="13">
    <source>
    </source>
</evidence>
<evidence type="ECO:0000312" key="14">
    <source>
        <dbReference type="MGI" id="MGI:1314647"/>
    </source>
</evidence>
<sequence>MAPRSVLETIQSVLQKNMVREFLAEFLSTYVMMVFGLGSVAHMVLGENSGSYLGVNLGFGFGVTMGVHVAGGISGAHMNAAVTFTNCALGRMTWKKFPVYVLGQFLGSFSAAATTYLIFYGAINHFAGGDLLVTGSKATANIFATYLPEYMTLWRGFLDEAFVTGMLQLCLFAITDKKNSPALQGTEPLVIGILVTVLGVSLGMNSGYAINPSRDLPPRLFTFIAGWGKQVFRAGNNWWWVPVVAPLLGAYLGGIVYLGLIHPSIPQDPQRLENFTARDQKVTASYKNAASANISGSVPLEHF</sequence>
<proteinExistence type="evidence at protein level"/>
<organism>
    <name type="scientific">Mus musculus</name>
    <name type="common">Mouse</name>
    <dbReference type="NCBI Taxonomy" id="10090"/>
    <lineage>
        <taxon>Eukaryota</taxon>
        <taxon>Metazoa</taxon>
        <taxon>Chordata</taxon>
        <taxon>Craniata</taxon>
        <taxon>Vertebrata</taxon>
        <taxon>Euteleostomi</taxon>
        <taxon>Mammalia</taxon>
        <taxon>Eutheria</taxon>
        <taxon>Euarchontoglires</taxon>
        <taxon>Glires</taxon>
        <taxon>Rodentia</taxon>
        <taxon>Myomorpha</taxon>
        <taxon>Muroidea</taxon>
        <taxon>Muridae</taxon>
        <taxon>Murinae</taxon>
        <taxon>Mus</taxon>
        <taxon>Mus</taxon>
    </lineage>
</organism>
<reference key="1">
    <citation type="submission" date="1998-01" db="EMBL/GenBank/DDBJ databases">
        <authorList>
            <person name="Ishibashi K."/>
        </authorList>
    </citation>
    <scope>NUCLEOTIDE SEQUENCE [MRNA]</scope>
    <source>
        <tissue>Testis</tissue>
    </source>
</reference>
<reference key="2">
    <citation type="journal article" date="2005" name="Science">
        <title>The transcriptional landscape of the mammalian genome.</title>
        <authorList>
            <person name="Carninci P."/>
            <person name="Kasukawa T."/>
            <person name="Katayama S."/>
            <person name="Gough J."/>
            <person name="Frith M.C."/>
            <person name="Maeda N."/>
            <person name="Oyama R."/>
            <person name="Ravasi T."/>
            <person name="Lenhard B."/>
            <person name="Wells C."/>
            <person name="Kodzius R."/>
            <person name="Shimokawa K."/>
            <person name="Bajic V.B."/>
            <person name="Brenner S.E."/>
            <person name="Batalov S."/>
            <person name="Forrest A.R."/>
            <person name="Zavolan M."/>
            <person name="Davis M.J."/>
            <person name="Wilming L.G."/>
            <person name="Aidinis V."/>
            <person name="Allen J.E."/>
            <person name="Ambesi-Impiombato A."/>
            <person name="Apweiler R."/>
            <person name="Aturaliya R.N."/>
            <person name="Bailey T.L."/>
            <person name="Bansal M."/>
            <person name="Baxter L."/>
            <person name="Beisel K.W."/>
            <person name="Bersano T."/>
            <person name="Bono H."/>
            <person name="Chalk A.M."/>
            <person name="Chiu K.P."/>
            <person name="Choudhary V."/>
            <person name="Christoffels A."/>
            <person name="Clutterbuck D.R."/>
            <person name="Crowe M.L."/>
            <person name="Dalla E."/>
            <person name="Dalrymple B.P."/>
            <person name="de Bono B."/>
            <person name="Della Gatta G."/>
            <person name="di Bernardo D."/>
            <person name="Down T."/>
            <person name="Engstrom P."/>
            <person name="Fagiolini M."/>
            <person name="Faulkner G."/>
            <person name="Fletcher C.F."/>
            <person name="Fukushima T."/>
            <person name="Furuno M."/>
            <person name="Futaki S."/>
            <person name="Gariboldi M."/>
            <person name="Georgii-Hemming P."/>
            <person name="Gingeras T.R."/>
            <person name="Gojobori T."/>
            <person name="Green R.E."/>
            <person name="Gustincich S."/>
            <person name="Harbers M."/>
            <person name="Hayashi Y."/>
            <person name="Hensch T.K."/>
            <person name="Hirokawa N."/>
            <person name="Hill D."/>
            <person name="Huminiecki L."/>
            <person name="Iacono M."/>
            <person name="Ikeo K."/>
            <person name="Iwama A."/>
            <person name="Ishikawa T."/>
            <person name="Jakt M."/>
            <person name="Kanapin A."/>
            <person name="Katoh M."/>
            <person name="Kawasawa Y."/>
            <person name="Kelso J."/>
            <person name="Kitamura H."/>
            <person name="Kitano H."/>
            <person name="Kollias G."/>
            <person name="Krishnan S.P."/>
            <person name="Kruger A."/>
            <person name="Kummerfeld S.K."/>
            <person name="Kurochkin I.V."/>
            <person name="Lareau L.F."/>
            <person name="Lazarevic D."/>
            <person name="Lipovich L."/>
            <person name="Liu J."/>
            <person name="Liuni S."/>
            <person name="McWilliam S."/>
            <person name="Madan Babu M."/>
            <person name="Madera M."/>
            <person name="Marchionni L."/>
            <person name="Matsuda H."/>
            <person name="Matsuzawa S."/>
            <person name="Miki H."/>
            <person name="Mignone F."/>
            <person name="Miyake S."/>
            <person name="Morris K."/>
            <person name="Mottagui-Tabar S."/>
            <person name="Mulder N."/>
            <person name="Nakano N."/>
            <person name="Nakauchi H."/>
            <person name="Ng P."/>
            <person name="Nilsson R."/>
            <person name="Nishiguchi S."/>
            <person name="Nishikawa S."/>
            <person name="Nori F."/>
            <person name="Ohara O."/>
            <person name="Okazaki Y."/>
            <person name="Orlando V."/>
            <person name="Pang K.C."/>
            <person name="Pavan W.J."/>
            <person name="Pavesi G."/>
            <person name="Pesole G."/>
            <person name="Petrovsky N."/>
            <person name="Piazza S."/>
            <person name="Reed J."/>
            <person name="Reid J.F."/>
            <person name="Ring B.Z."/>
            <person name="Ringwald M."/>
            <person name="Rost B."/>
            <person name="Ruan Y."/>
            <person name="Salzberg S.L."/>
            <person name="Sandelin A."/>
            <person name="Schneider C."/>
            <person name="Schoenbach C."/>
            <person name="Sekiguchi K."/>
            <person name="Semple C.A."/>
            <person name="Seno S."/>
            <person name="Sessa L."/>
            <person name="Sheng Y."/>
            <person name="Shibata Y."/>
            <person name="Shimada H."/>
            <person name="Shimada K."/>
            <person name="Silva D."/>
            <person name="Sinclair B."/>
            <person name="Sperling S."/>
            <person name="Stupka E."/>
            <person name="Sugiura K."/>
            <person name="Sultana R."/>
            <person name="Takenaka Y."/>
            <person name="Taki K."/>
            <person name="Tammoja K."/>
            <person name="Tan S.L."/>
            <person name="Tang S."/>
            <person name="Taylor M.S."/>
            <person name="Tegner J."/>
            <person name="Teichmann S.A."/>
            <person name="Ueda H.R."/>
            <person name="van Nimwegen E."/>
            <person name="Verardo R."/>
            <person name="Wei C.L."/>
            <person name="Yagi K."/>
            <person name="Yamanishi H."/>
            <person name="Zabarovsky E."/>
            <person name="Zhu S."/>
            <person name="Zimmer A."/>
            <person name="Hide W."/>
            <person name="Bult C."/>
            <person name="Grimmond S.M."/>
            <person name="Teasdale R.D."/>
            <person name="Liu E.T."/>
            <person name="Brusic V."/>
            <person name="Quackenbush J."/>
            <person name="Wahlestedt C."/>
            <person name="Mattick J.S."/>
            <person name="Hume D.A."/>
            <person name="Kai C."/>
            <person name="Sasaki D."/>
            <person name="Tomaru Y."/>
            <person name="Fukuda S."/>
            <person name="Kanamori-Katayama M."/>
            <person name="Suzuki M."/>
            <person name="Aoki J."/>
            <person name="Arakawa T."/>
            <person name="Iida J."/>
            <person name="Imamura K."/>
            <person name="Itoh M."/>
            <person name="Kato T."/>
            <person name="Kawaji H."/>
            <person name="Kawagashira N."/>
            <person name="Kawashima T."/>
            <person name="Kojima M."/>
            <person name="Kondo S."/>
            <person name="Konno H."/>
            <person name="Nakano K."/>
            <person name="Ninomiya N."/>
            <person name="Nishio T."/>
            <person name="Okada M."/>
            <person name="Plessy C."/>
            <person name="Shibata K."/>
            <person name="Shiraki T."/>
            <person name="Suzuki S."/>
            <person name="Tagami M."/>
            <person name="Waki K."/>
            <person name="Watahiki A."/>
            <person name="Okamura-Oho Y."/>
            <person name="Suzuki H."/>
            <person name="Kawai J."/>
            <person name="Hayashizaki Y."/>
        </authorList>
    </citation>
    <scope>NUCLEOTIDE SEQUENCE [LARGE SCALE MRNA]</scope>
    <source>
        <strain>C57BL/6J</strain>
        <tissue>Testis</tissue>
    </source>
</reference>
<reference key="3">
    <citation type="journal article" date="2004" name="Genome Res.">
        <title>The status, quality, and expansion of the NIH full-length cDNA project: the Mammalian Gene Collection (MGC).</title>
        <authorList>
            <consortium name="The MGC Project Team"/>
        </authorList>
    </citation>
    <scope>NUCLEOTIDE SEQUENCE [LARGE SCALE MRNA]</scope>
    <source>
        <strain>FVB/N</strain>
        <tissue>Kidney</tissue>
    </source>
</reference>
<reference key="4">
    <citation type="journal article" date="2010" name="Cell">
        <title>A tissue-specific atlas of mouse protein phosphorylation and expression.</title>
        <authorList>
            <person name="Huttlin E.L."/>
            <person name="Jedrychowski M.P."/>
            <person name="Elias J.E."/>
            <person name="Goswami T."/>
            <person name="Rad R."/>
            <person name="Beausoleil S.A."/>
            <person name="Villen J."/>
            <person name="Haas W."/>
            <person name="Sowa M.E."/>
            <person name="Gygi S.P."/>
        </authorList>
    </citation>
    <scope>IDENTIFICATION BY MASS SPECTROMETRY [LARGE SCALE ANALYSIS]</scope>
    <source>
        <tissue>Brown adipose tissue</tissue>
        <tissue>Testis</tissue>
    </source>
</reference>
<reference key="5">
    <citation type="journal article" date="2004" name="Proc. Natl. Acad. Sci. U.S.A.">
        <title>Adaptation to fasting by glycerol transport through aquaporin 7 in adipose tissue.</title>
        <authorList>
            <person name="Maeda N."/>
            <person name="Funahashi T."/>
            <person name="Hibuse T."/>
            <person name="Nagasawa A."/>
            <person name="Kishida K."/>
            <person name="Kuriyama H."/>
            <person name="Nakamura T."/>
            <person name="Kihara S."/>
            <person name="Shimomura I."/>
            <person name="Matsuzawa Y."/>
        </authorList>
    </citation>
    <scope>FUNCTION</scope>
    <scope>DISRUPTION PHENOTYPE</scope>
    <scope>TISSUE SPECIFICITY</scope>
</reference>
<reference key="6">
    <citation type="journal article" date="2005" name="J. Biol. Chem.">
        <title>Progressive adipocyte hypertrophy in aquaporin-7-deficient mice: adipocyte glycerol permeability as a novel regulator of fat accumulation.</title>
        <authorList>
            <person name="Hara-Chikuma M."/>
            <person name="Sohara E."/>
            <person name="Rai T."/>
            <person name="Ikawa M."/>
            <person name="Okabe M."/>
            <person name="Sasaki S."/>
            <person name="Uchida S."/>
            <person name="Verkman A.S."/>
        </authorList>
    </citation>
    <scope>FUNCTION</scope>
    <scope>DISRUPTION PHENOTYPE</scope>
    <scope>SUBCELLULAR LOCATION</scope>
    <scope>TISSUE SPECIFICITY</scope>
</reference>
<reference key="7">
    <citation type="journal article" date="2005" name="Am. J. Physiol.">
        <title>Defective water and glycerol transport in the proximal tubules of AQP7 knockout mice.</title>
        <authorList>
            <person name="Sohara E."/>
            <person name="Rai T."/>
            <person name="Miyazaki J."/>
            <person name="Verkman A.S."/>
            <person name="Sasaki S."/>
            <person name="Uchida S."/>
        </authorList>
    </citation>
    <scope>FUNCTION</scope>
    <scope>DISRUPTION PHENOTYPE</scope>
</reference>
<reference key="8">
    <citation type="journal article" date="2005" name="Proc. Natl. Acad. Sci. U.S.A.">
        <title>Aquaporin 7 deficiency is associated with development of obesity through activation of adipose glycerol kinase.</title>
        <authorList>
            <person name="Hibuse T."/>
            <person name="Maeda N."/>
            <person name="Funahashi T."/>
            <person name="Yamamoto K."/>
            <person name="Nagasawa A."/>
            <person name="Mizunoya W."/>
            <person name="Kishida K."/>
            <person name="Inoue K."/>
            <person name="Kuriyama H."/>
            <person name="Nakamura T."/>
            <person name="Fushiki T."/>
            <person name="Kihara S."/>
            <person name="Shimomura I."/>
        </authorList>
    </citation>
    <scope>FUNCTION</scope>
    <scope>DISRUPTION PHENOTYPE</scope>
</reference>
<reference key="9">
    <citation type="journal article" date="2007" name="Mol. Cell. Biol.">
        <title>Aquaporin 7 is a beta-cell protein and regulator of intraislet glycerol content and glycerol kinase activity, beta-cell mass, and insulin production and secretion.</title>
        <authorList>
            <person name="Matsumura K."/>
            <person name="Chang B.H."/>
            <person name="Fujimiya M."/>
            <person name="Chen W."/>
            <person name="Kulkarni R.N."/>
            <person name="Eguchi Y."/>
            <person name="Kimura H."/>
            <person name="Kojima H."/>
            <person name="Chan L."/>
        </authorList>
    </citation>
    <scope>FUNCTION</scope>
    <scope>DISRUPTION PHENOTYPE</scope>
</reference>
<reference key="10">
    <citation type="journal article" date="2007" name="Am. J. Physiol.">
        <title>AQP7 is localized in capillaries of adipose tissue, cardiac and striated muscle: implications in glycerol metabolism.</title>
        <authorList>
            <person name="Skowronski M.T."/>
            <person name="Lebeck J."/>
            <person name="Rojek A."/>
            <person name="Praetorius J."/>
            <person name="Fuechtbauer E.M."/>
            <person name="Froekiaer J."/>
            <person name="Nielsen S."/>
        </authorList>
    </citation>
    <scope>FUNCTION</scope>
    <scope>SUBCELLULAR LOCATION</scope>
    <scope>DISRUPTION PHENOTYPE</scope>
    <scope>TISSUE SPECIFICITY</scope>
</reference>
<reference key="11">
    <citation type="journal article" date="2015" name="FEBS Lett.">
        <title>Dynamic subcellular localization of aquaporin-7 in white adipocytes.</title>
        <authorList>
            <person name="Miyauchi T."/>
            <person name="Yamamoto H."/>
            <person name="Abe Y."/>
            <person name="Yoshida G.J."/>
            <person name="Rojek A."/>
            <person name="Sohara E."/>
            <person name="Uchida S."/>
            <person name="Nielsen S."/>
            <person name="Yasui M."/>
        </authorList>
    </citation>
    <scope>SUBCELLULAR LOCATION</scope>
    <scope>TISSUE SPECIFICITY</scope>
</reference>
<keyword id="KW-1003">Cell membrane</keyword>
<keyword id="KW-0968">Cytoplasmic vesicle</keyword>
<keyword id="KW-0551">Lipid droplet</keyword>
<keyword id="KW-0472">Membrane</keyword>
<keyword id="KW-0597">Phosphoprotein</keyword>
<keyword id="KW-1185">Reference proteome</keyword>
<keyword id="KW-0677">Repeat</keyword>
<keyword id="KW-0812">Transmembrane</keyword>
<keyword id="KW-1133">Transmembrane helix</keyword>
<keyword id="KW-0813">Transport</keyword>
<gene>
    <name evidence="14" type="primary">Aqp7</name>
</gene>
<protein>
    <recommendedName>
        <fullName evidence="13">Aquaporin-7</fullName>
        <shortName>AQP-7</shortName>
    </recommendedName>
    <alternativeName>
        <fullName>Aquaglyceroporin-7</fullName>
    </alternativeName>
</protein>
<accession>O54794</accession>
<accession>Q8C630</accession>
<name>AQP7_MOUSE</name>
<comment type="function">
    <text evidence="1 5 6 7 8 9 10">Aquaglyceroporins form homotetrameric transmembrane channels, with each monomer independently mediating glycerol and water transport across the plasma membrane along their osmotic gradient. Could also be permeable to urea (By similarity). Mediates the efflux of glycerol, formed upon triglyceride hydrolysis, to avoid its accumulation in adipocytes and to make it available to other tissues (PubMed:15591341, PubMed:15746100, PubMed:16009937). In the kidney, mediates the reabsorption of glycerol, preventing its loss in urine, again participating to energy homeostasis (PubMed:15998844, PubMed:17077387). In pancreatic beta cells, it also mediates the efflux of glycerol, regulating its intracellular levels (PubMed:17576812).</text>
</comment>
<comment type="catalytic activity">
    <reaction evidence="1">
        <text>glycerol(in) = glycerol(out)</text>
        <dbReference type="Rhea" id="RHEA:29675"/>
        <dbReference type="ChEBI" id="CHEBI:17754"/>
    </reaction>
</comment>
<comment type="catalytic activity">
    <reaction evidence="1">
        <text>H2O(in) = H2O(out)</text>
        <dbReference type="Rhea" id="RHEA:29667"/>
        <dbReference type="ChEBI" id="CHEBI:15377"/>
    </reaction>
</comment>
<comment type="catalytic activity">
    <reaction evidence="1">
        <text>urea(in) = urea(out)</text>
        <dbReference type="Rhea" id="RHEA:32799"/>
        <dbReference type="ChEBI" id="CHEBI:16199"/>
    </reaction>
</comment>
<comment type="activity regulation">
    <text evidence="1">Glycerol transport is regulated by pH, with the porin being permeable to glycerol at pH 7.4 but not at pH 5.5. Water permeability, however, is not influenced by pH.</text>
</comment>
<comment type="subunit">
    <text evidence="1">Homotetramer; each monomer provides an independent glycerol/water pore. Two homotetramers on opposing membranes can dimerize, forming a cell-cell junction. Interacts with PLIN1.</text>
</comment>
<comment type="subcellular location">
    <subcellularLocation>
        <location evidence="6 9 11">Cell membrane</location>
        <topology evidence="3">Multi-pass membrane protein</topology>
    </subcellularLocation>
    <subcellularLocation>
        <location evidence="11">Cytoplasmic vesicle membrane</location>
        <topology evidence="3">Multi-pass membrane protein</topology>
    </subcellularLocation>
    <subcellularLocation>
        <location evidence="11">Lipid droplet</location>
    </subcellularLocation>
    <text evidence="1 11">Internalized from the cell membrane in response to catecholamine-induced activation of PKA; detected on intracellular membranes and colocalizes with lipid droplets (PubMed:25643985). Colocalizes with PLIN1 in adipocytes, probably on lipid droplets (By similarity).</text>
</comment>
<comment type="tissue specificity">
    <text evidence="5 6 7 9 11">Detected in proximal tubules in kidney (PubMed:15998844, PubMed:17077387). Detected in the capillary network between muscle fibers in skeletal muscle and heart, and in spermatids and on spermatozoa tails in testis and epididymis (PubMed:17077387). Detected in white and brown adipose tissue, especially on small blood vessels (at protein level) (PubMed:15591341, PubMed:17077387, PubMed:25643985). Detected in kidney and white adipose tissue (PubMed:15746100).</text>
</comment>
<comment type="domain">
    <text evidence="2">Aquaporins contain two tandem repeats each containing three membrane-spanning domains and a pore-forming loop with the signature motif Asn-Pro/Ala-Ala/Ser (NPA).</text>
</comment>
<comment type="PTM">
    <text evidence="1">Phosphorylation by PKA could prevent the interaction with PLIN1.</text>
</comment>
<comment type="disruption phenotype">
    <text evidence="5 6 7 8 9 10">Young mutant mice appear normal and are fertile (PubMed:16009937, PubMed:17576812, PubMed:17077387). However, they start to become obese after about 12 weeks and display enlarged adipocytes (PubMed:15746100, PubMed:16009937). The effects on plasma glycerol levels vary between experiments; some reports find no significant difference in plasma glycerol levels in fed animals (PubMed:15746100, PubMed:15998844, PubMed:17077387). Others report decreased plasma glycerol levels in fed animals (PubMed:15591341). After fasting, mutant mice display lower plasma glycerol levels than wild-type, and increased glycerol content in their adipose tissue (PubMed:15591341, PubMed:16009937). After fasting, mutant mice display lower blood glucose levels than wild-type (PubMed:15591341). Mutant mice display strongly increased glycerol levels in urine (PubMed:15998844, PubMed:17077387). Water permeability of brush border membranes is slightly reduced, but urinary concentrating ability is not altered (PubMed:15998844). In pancreas, Aqp7 inactivation reduces islet size and total islet cell mass, associated with intracellular accumulation of glycerol and hyperinsulinemia (PubMed:17576812).</text>
</comment>
<comment type="similarity">
    <text evidence="12">Belongs to the MIP/aquaporin (TC 1.A.8) family.</text>
</comment>